<feature type="chain" id="PRO_0000222569" description="Movement and silencing protein TGBp1">
    <location>
        <begin position="1"/>
        <end position="233"/>
    </location>
</feature>
<feature type="domain" description="(+)RNA virus helicase ATP-binding">
    <location>
        <begin position="1"/>
        <end position="133"/>
    </location>
</feature>
<feature type="domain" description="(+)RNA virus helicase C-terminal">
    <location>
        <begin position="134"/>
        <end position="233"/>
    </location>
</feature>
<evidence type="ECO:0000250" key="1"/>
<evidence type="ECO:0000305" key="2"/>
<comment type="function">
    <text evidence="1">Transports viral genome to neighboring plant cells directly through plasmosdesmata, without any budding. The movement protein allows efficient cell to cell propagation, by bypassing the host cell wall barrier. Increases plasmodesma size exclusion limit. Acts as a suppressor of RNA-mediated gene silencing, also known as post-transcriptional gene silencing (PTGS), a mechanism of plant viral defense that limits the accumulation of viral RNAs (By similarity).</text>
</comment>
<comment type="subunit">
    <text evidence="1">Homodimer and homooligomer. Interacts with capsid protein. Interacts with host AGO1; this interaction targets the host protein for degradation, thereby suppressing the antiviral RNA silencing (By similarity).</text>
</comment>
<comment type="subcellular location">
    <subcellularLocation>
        <location evidence="1">Host cytoplasm</location>
    </subcellularLocation>
</comment>
<comment type="miscellaneous">
    <text>TGBp1, TGBp2 and TGBp3 seem to act together for cell-to-cell propagation. TGBp1 is the main movement protein that physically cross the plasmodesma with the viral genome. TGBp2 and TGBp3 would facilitate TGBp1 function.</text>
</comment>
<comment type="similarity">
    <text evidence="2">Belongs to the Tymovirales TGBp1 protein family.</text>
</comment>
<proteinExistence type="inferred from homology"/>
<gene>
    <name type="ORF">ORF2</name>
</gene>
<dbReference type="EMBL" id="D13957">
    <property type="protein sequence ID" value="BAA03051.1"/>
    <property type="molecule type" value="Genomic_RNA"/>
</dbReference>
<dbReference type="PIR" id="JQ0097">
    <property type="entry name" value="JQ0097"/>
</dbReference>
<dbReference type="RefSeq" id="NP_044331.1">
    <property type="nucleotide sequence ID" value="NC_001748.1"/>
</dbReference>
<dbReference type="KEGG" id="vg:1494024"/>
<dbReference type="OrthoDB" id="16070at10239"/>
<dbReference type="Proteomes" id="UP000000477">
    <property type="component" value="Genome"/>
</dbReference>
<dbReference type="GO" id="GO:0030430">
    <property type="term" value="C:host cell cytoplasm"/>
    <property type="evidence" value="ECO:0007669"/>
    <property type="project" value="UniProtKB-SubCell"/>
</dbReference>
<dbReference type="GO" id="GO:0005524">
    <property type="term" value="F:ATP binding"/>
    <property type="evidence" value="ECO:0007669"/>
    <property type="project" value="InterPro"/>
</dbReference>
<dbReference type="GO" id="GO:0003723">
    <property type="term" value="F:RNA binding"/>
    <property type="evidence" value="ECO:0007669"/>
    <property type="project" value="UniProtKB-KW"/>
</dbReference>
<dbReference type="GO" id="GO:0052170">
    <property type="term" value="P:symbiont-mediated suppression of host innate immune response"/>
    <property type="evidence" value="ECO:0007669"/>
    <property type="project" value="UniProtKB-KW"/>
</dbReference>
<dbReference type="GO" id="GO:0046740">
    <property type="term" value="P:transport of virus in host, cell to cell"/>
    <property type="evidence" value="ECO:0007669"/>
    <property type="project" value="UniProtKB-KW"/>
</dbReference>
<dbReference type="InterPro" id="IPR027351">
    <property type="entry name" value="(+)RNA_virus_helicase_core_dom"/>
</dbReference>
<dbReference type="Pfam" id="PF01443">
    <property type="entry name" value="Viral_helicase1"/>
    <property type="match status" value="1"/>
</dbReference>
<dbReference type="PROSITE" id="PS51657">
    <property type="entry name" value="PSRV_HELICASE"/>
    <property type="match status" value="1"/>
</dbReference>
<keyword id="KW-1035">Host cytoplasm</keyword>
<keyword id="KW-0945">Host-virus interaction</keyword>
<keyword id="KW-1090">Inhibition of host innate immune response by virus</keyword>
<keyword id="KW-1185">Reference proteome</keyword>
<keyword id="KW-0694">RNA-binding</keyword>
<keyword id="KW-0941">Suppressor of RNA silencing</keyword>
<keyword id="KW-0813">Transport</keyword>
<keyword id="KW-0899">Viral immunoevasion</keyword>
<keyword id="KW-0916">Viral movement protein</keyword>
<accession>P20952</accession>
<name>TGB1_PMV</name>
<organismHost>
    <name type="scientific">Carica papaya</name>
    <name type="common">Papaya</name>
    <dbReference type="NCBI Taxonomy" id="3649"/>
</organismHost>
<organismHost>
    <name type="scientific">Ullucus tuberosus</name>
    <name type="common">Olluco</name>
    <dbReference type="NCBI Taxonomy" id="108055"/>
</organismHost>
<reference key="1">
    <citation type="journal article" date="1989" name="J. Gen. Virol.">
        <title>Nucleotide sequence of papaya mosaic virus RNA.</title>
        <authorList>
            <person name="Sit T.L."/>
            <person name="Abouhaidar M.G."/>
            <person name="Holy S."/>
        </authorList>
    </citation>
    <scope>NUCLEOTIDE SEQUENCE [GENOMIC RNA]</scope>
</reference>
<reference key="2">
    <citation type="journal article" date="2005" name="Mol. Plant Microbe Interact.">
        <title>A new cell-to-cell transport model for Potexviruses.</title>
        <authorList>
            <person name="Verchot-Lubicz J."/>
        </authorList>
    </citation>
    <scope>REVIEW</scope>
</reference>
<sequence length="233" mass="26250">MNHFINLLVAEGFVRTNEPLTDQLVVHSVAGSGKSTLIRKFLEEQPLARAYTHCRADPPNLEGRFIQPFKGPCPDHFNILDEYCKEPISAKFQVLIADPLQYRTQHLRPHYVNHKSHRLGPETCKLLSSLGIKVESHRRDRDVVTLSGIFGSPILGQAIALDRSASDLLRAHGIQALCPIESIGQEYPVVTVVSSEPLRNVRFKDQVYIALSRHTEQLHVLSPEFPHTTSRPQ</sequence>
<protein>
    <recommendedName>
        <fullName>Movement and silencing protein TGBp1</fullName>
    </recommendedName>
    <alternativeName>
        <fullName>25 kDa protein</fullName>
    </alternativeName>
    <alternativeName>
        <fullName>Silencing suppressor P25</fullName>
    </alternativeName>
    <alternativeName>
        <fullName>Triple gene block 1 protein</fullName>
        <shortName>TGBp1</shortName>
    </alternativeName>
</protein>
<organism>
    <name type="scientific">Papaya mosaic potexvirus</name>
    <name type="common">PMV</name>
    <dbReference type="NCBI Taxonomy" id="12181"/>
    <lineage>
        <taxon>Viruses</taxon>
        <taxon>Riboviria</taxon>
        <taxon>Orthornavirae</taxon>
        <taxon>Kitrinoviricota</taxon>
        <taxon>Alsuviricetes</taxon>
        <taxon>Tymovirales</taxon>
        <taxon>Alphaflexiviridae</taxon>
        <taxon>Potexvirus</taxon>
    </lineage>
</organism>